<feature type="chain" id="PRO_0000158992" description="Myelin basic protein">
    <location>
        <begin position="1"/>
        <end position="171"/>
    </location>
</feature>
<feature type="region of interest" description="Disordered" evidence="7">
    <location>
        <begin position="44"/>
        <end position="115"/>
    </location>
</feature>
<feature type="site" description="Cleavage; by CTSG" evidence="2">
    <location>
        <begin position="90"/>
        <end position="91"/>
    </location>
</feature>
<feature type="site" description="Cleavage; by CTSG" evidence="2">
    <location>
        <begin position="114"/>
        <end position="115"/>
    </location>
</feature>
<feature type="modified residue" description="N-acetylalanine" evidence="8">
    <location>
        <position position="1"/>
    </location>
</feature>
<feature type="modified residue" description="Phosphoserine" evidence="3">
    <location>
        <position position="7"/>
    </location>
</feature>
<feature type="modified residue" description="Phosphoserine" evidence="5">
    <location>
        <position position="12"/>
    </location>
</feature>
<feature type="modified residue" description="Phosphotyrosine" evidence="4">
    <location>
        <position position="14"/>
    </location>
</feature>
<feature type="modified residue" description="Phosphothreonine" evidence="4">
    <location>
        <position position="17"/>
    </location>
</feature>
<feature type="modified residue" description="Phosphoserine" evidence="5">
    <location>
        <position position="19"/>
    </location>
</feature>
<feature type="modified residue" description="Phosphothreonine" evidence="4">
    <location>
        <position position="20"/>
    </location>
</feature>
<feature type="modified residue" description="Citrulline" evidence="1">
    <location>
        <position position="25"/>
    </location>
</feature>
<feature type="modified residue" description="Citrulline" evidence="1">
    <location>
        <position position="31"/>
    </location>
</feature>
<feature type="modified residue" description="Phosphothreonine" evidence="5">
    <location>
        <position position="35"/>
    </location>
</feature>
<feature type="modified residue" description="Phosphoserine" evidence="5">
    <location>
        <position position="40"/>
    </location>
</feature>
<feature type="modified residue" description="Omega-N-methylarginine" evidence="5">
    <location>
        <position position="43"/>
    </location>
</feature>
<feature type="modified residue" description="Omega-N-methylarginine" evidence="5">
    <location>
        <position position="49"/>
    </location>
</feature>
<feature type="modified residue" description="Phosphoserine" evidence="3">
    <location>
        <position position="56"/>
    </location>
</feature>
<feature type="modified residue" description="Phosphotyrosine" evidence="5">
    <location>
        <position position="69"/>
    </location>
</feature>
<feature type="modified residue" description="Phosphoserine" evidence="5">
    <location>
        <position position="76"/>
    </location>
</feature>
<feature type="modified residue" description="Phosphothreonine" evidence="5">
    <location>
        <position position="80"/>
    </location>
</feature>
<feature type="modified residue" description="Phosphothreonine" evidence="4">
    <location>
        <position position="95"/>
    </location>
</feature>
<feature type="modified residue" description="Phosphothreonine" evidence="3">
    <location>
        <position position="98"/>
    </location>
</feature>
<feature type="modified residue" description="Deamidated glutamine" evidence="1">
    <location>
        <position position="103"/>
    </location>
</feature>
<feature type="modified residue" description="Omega-N-methylarginine; alternate" evidence="3">
    <location>
        <position position="107"/>
    </location>
</feature>
<feature type="modified residue" description="Symmetric dimethylarginine; alternate" evidence="3">
    <location>
        <position position="107"/>
    </location>
</feature>
<feature type="modified residue" description="Phosphoserine" evidence="6">
    <location>
        <position position="115"/>
    </location>
</feature>
<feature type="modified residue" description="Citrulline" evidence="1">
    <location>
        <position position="122"/>
    </location>
</feature>
<feature type="modified residue" description="Citrulline" evidence="1">
    <location>
        <position position="130"/>
    </location>
</feature>
<feature type="modified residue" description="Deamidated glutamine" evidence="1">
    <location>
        <position position="148"/>
    </location>
</feature>
<feature type="modified residue" description="Citrulline" evidence="1">
    <location>
        <position position="160"/>
    </location>
</feature>
<feature type="modified residue" description="Phosphoserine" evidence="3">
    <location>
        <position position="162"/>
    </location>
</feature>
<feature type="modified residue" description="Phosphoserine; by UHMK1" evidence="3">
    <location>
        <position position="166"/>
    </location>
</feature>
<feature type="modified residue" description="Citrulline" evidence="1">
    <location>
        <position position="171"/>
    </location>
</feature>
<protein>
    <recommendedName>
        <fullName>Myelin basic protein</fullName>
        <shortName>MBP</shortName>
    </recommendedName>
</protein>
<dbReference type="PIR" id="A03139">
    <property type="entry name" value="MBCZB"/>
</dbReference>
<dbReference type="BMRB" id="P06906"/>
<dbReference type="SMR" id="P06906"/>
<dbReference type="STRING" id="9598.ENSPTRP00000091696"/>
<dbReference type="iPTMnet" id="P06906"/>
<dbReference type="PaxDb" id="9598-ENSPTRP00000056200"/>
<dbReference type="eggNOG" id="ENOG502S4SJ">
    <property type="taxonomic scope" value="Eukaryota"/>
</dbReference>
<dbReference type="InParanoid" id="P06906"/>
<dbReference type="Proteomes" id="UP000002277">
    <property type="component" value="Unplaced"/>
</dbReference>
<dbReference type="GO" id="GO:0071944">
    <property type="term" value="C:cell periphery"/>
    <property type="evidence" value="ECO:0000318"/>
    <property type="project" value="GO_Central"/>
</dbReference>
<dbReference type="GO" id="GO:0043218">
    <property type="term" value="C:compact myelin"/>
    <property type="evidence" value="ECO:0000318"/>
    <property type="project" value="GO_Central"/>
</dbReference>
<dbReference type="GO" id="GO:0033269">
    <property type="term" value="C:internode region of axon"/>
    <property type="evidence" value="ECO:0000318"/>
    <property type="project" value="GO_Central"/>
</dbReference>
<dbReference type="GO" id="GO:0043025">
    <property type="term" value="C:neuronal cell body"/>
    <property type="evidence" value="ECO:0000318"/>
    <property type="project" value="GO_Central"/>
</dbReference>
<dbReference type="GO" id="GO:0005886">
    <property type="term" value="C:plasma membrane"/>
    <property type="evidence" value="ECO:0007669"/>
    <property type="project" value="UniProtKB-KW"/>
</dbReference>
<dbReference type="GO" id="GO:0019911">
    <property type="term" value="F:structural constituent of myelin sheath"/>
    <property type="evidence" value="ECO:0007669"/>
    <property type="project" value="InterPro"/>
</dbReference>
<dbReference type="GO" id="GO:0042552">
    <property type="term" value="P:myelination"/>
    <property type="evidence" value="ECO:0000318"/>
    <property type="project" value="GO_Central"/>
</dbReference>
<dbReference type="InterPro" id="IPR000548">
    <property type="entry name" value="Myelin_BP"/>
</dbReference>
<dbReference type="PANTHER" id="PTHR11429">
    <property type="entry name" value="MYELIN BASIC PROTEIN"/>
    <property type="match status" value="1"/>
</dbReference>
<dbReference type="PANTHER" id="PTHR11429:SF0">
    <property type="entry name" value="MYELIN BASIC PROTEIN"/>
    <property type="match status" value="1"/>
</dbReference>
<dbReference type="Pfam" id="PF01669">
    <property type="entry name" value="Myelin_MBP"/>
    <property type="match status" value="1"/>
</dbReference>
<dbReference type="PRINTS" id="PR00212">
    <property type="entry name" value="MYELINMBP"/>
</dbReference>
<dbReference type="PROSITE" id="PS00569">
    <property type="entry name" value="MYELIN_MBP"/>
    <property type="match status" value="1"/>
</dbReference>
<organism>
    <name type="scientific">Pan troglodytes</name>
    <name type="common">Chimpanzee</name>
    <dbReference type="NCBI Taxonomy" id="9598"/>
    <lineage>
        <taxon>Eukaryota</taxon>
        <taxon>Metazoa</taxon>
        <taxon>Chordata</taxon>
        <taxon>Craniata</taxon>
        <taxon>Vertebrata</taxon>
        <taxon>Euteleostomi</taxon>
        <taxon>Mammalia</taxon>
        <taxon>Eutheria</taxon>
        <taxon>Euarchontoglires</taxon>
        <taxon>Primates</taxon>
        <taxon>Haplorrhini</taxon>
        <taxon>Catarrhini</taxon>
        <taxon>Hominidae</taxon>
        <taxon>Pan</taxon>
    </lineage>
</organism>
<gene>
    <name type="primary">MBP</name>
</gene>
<keyword id="KW-0007">Acetylation</keyword>
<keyword id="KW-0069">Autoimmune encephalomyelitis</keyword>
<keyword id="KW-1003">Cell membrane</keyword>
<keyword id="KW-0164">Citrullination</keyword>
<keyword id="KW-0903">Direct protein sequencing</keyword>
<keyword id="KW-0472">Membrane</keyword>
<keyword id="KW-0488">Methylation</keyword>
<keyword id="KW-0597">Phosphoprotein</keyword>
<keyword id="KW-1185">Reference proteome</keyword>
<comment type="function">
    <text evidence="1">Is, with PLP, the most abundant protein component of the myelin membrane in the CNS. Has a role in both the formation and stabilization of this compact multilayer arrangement of bilayers. Each splice variant and charge isomer may have a specialized function in the assembly of an optimized, biochemically functional myelin membrane (By similarity).</text>
</comment>
<comment type="subunit">
    <text evidence="1">Homodimer.</text>
</comment>
<comment type="subcellular location">
    <subcellularLocation>
        <location>Myelin membrane</location>
        <topology>Peripheral membrane protein</topology>
        <orientation>Cytoplasmic side</orientation>
    </subcellularLocation>
    <text>Cytoplasmic side of myelin.</text>
</comment>
<comment type="PTM">
    <text>As in other animals, several charge isomers may be produced as a result of optional post-translational modifications, such as phosphorylation of serine or threonine residues, deamidation of glutamine or asparagine residues, citrullination and methylation of arginine residues.</text>
</comment>
<comment type="PTM">
    <text evidence="1">Phosphorylated by TAOK2, VRK2, MAPK11, MAPK12, MAPK14 and MINK1.</text>
</comment>
<comment type="PTM">
    <text evidence="2">Proteolytically cleaved in B cell lysosomes by cathepsin CTSG which degrades the major immunogenic MBP epitope and prevents the activation of MBP-specific autoreactive T cells.</text>
</comment>
<comment type="similarity">
    <text evidence="9">Belongs to the myelin basic protein family.</text>
</comment>
<evidence type="ECO:0000250" key="1"/>
<evidence type="ECO:0000250" key="2">
    <source>
        <dbReference type="UniProtKB" id="P02686"/>
    </source>
</evidence>
<evidence type="ECO:0000250" key="3">
    <source>
        <dbReference type="UniProtKB" id="P02687"/>
    </source>
</evidence>
<evidence type="ECO:0000250" key="4">
    <source>
        <dbReference type="UniProtKB" id="P02688"/>
    </source>
</evidence>
<evidence type="ECO:0000250" key="5">
    <source>
        <dbReference type="UniProtKB" id="P04370"/>
    </source>
</evidence>
<evidence type="ECO:0000250" key="6">
    <source>
        <dbReference type="UniProtKB" id="P25274"/>
    </source>
</evidence>
<evidence type="ECO:0000256" key="7">
    <source>
        <dbReference type="SAM" id="MobiDB-lite"/>
    </source>
</evidence>
<evidence type="ECO:0000269" key="8">
    <source>
    </source>
</evidence>
<evidence type="ECO:0000305" key="9"/>
<name>MBP_PANTR</name>
<proteinExistence type="evidence at protein level"/>
<accession>P06906</accession>
<sequence length="171" mass="18560">ASQKRPSQRHGSKYLATASTMDHARHGFLPRHRDTGILDSIGRFFGGDRGAPKRGSGKDSHHPARTAHYGSLPQKSGHRTQDENPVVHFFKNIVTPRTPPPSQGKGRGLSLSRFSWGAEGQRPGFGYGGRASDYKSAHKGFKGAQDAQGTLSKIFKLGGRDSRSGSPMARR</sequence>
<reference key="1">
    <citation type="journal article" date="1975" name="Life Sci.">
        <title>The proposed sequence of the encephalitogenic protein from chimpanzee brain.</title>
        <authorList>
            <person name="Westall F.C."/>
            <person name="Thompson M."/>
            <person name="Kalter S.S."/>
        </authorList>
    </citation>
    <scope>PRELIMINARY PROTEIN SEQUENCE</scope>
    <scope>ACETYLATION AT ALA-1</scope>
</reference>